<accession>Q74CZ6</accession>
<gene>
    <name evidence="1" type="primary">surE</name>
    <name type="ordered locus">GSU1523</name>
</gene>
<dbReference type="EC" id="3.1.3.5" evidence="1"/>
<dbReference type="EMBL" id="AE017180">
    <property type="protein sequence ID" value="AAR34897.1"/>
    <property type="molecule type" value="Genomic_DNA"/>
</dbReference>
<dbReference type="RefSeq" id="NP_952574.1">
    <property type="nucleotide sequence ID" value="NC_002939.5"/>
</dbReference>
<dbReference type="RefSeq" id="WP_010942170.1">
    <property type="nucleotide sequence ID" value="NC_002939.5"/>
</dbReference>
<dbReference type="SMR" id="Q74CZ6"/>
<dbReference type="FunCoup" id="Q74CZ6">
    <property type="interactions" value="205"/>
</dbReference>
<dbReference type="STRING" id="243231.GSU1523"/>
<dbReference type="EnsemblBacteria" id="AAR34897">
    <property type="protein sequence ID" value="AAR34897"/>
    <property type="gene ID" value="GSU1523"/>
</dbReference>
<dbReference type="KEGG" id="gsu:GSU1523"/>
<dbReference type="PATRIC" id="fig|243231.5.peg.1565"/>
<dbReference type="eggNOG" id="COG0496">
    <property type="taxonomic scope" value="Bacteria"/>
</dbReference>
<dbReference type="HOGENOM" id="CLU_045192_1_2_7"/>
<dbReference type="InParanoid" id="Q74CZ6"/>
<dbReference type="OrthoDB" id="9780815at2"/>
<dbReference type="Proteomes" id="UP000000577">
    <property type="component" value="Chromosome"/>
</dbReference>
<dbReference type="GO" id="GO:0005737">
    <property type="term" value="C:cytoplasm"/>
    <property type="evidence" value="ECO:0007669"/>
    <property type="project" value="UniProtKB-SubCell"/>
</dbReference>
<dbReference type="GO" id="GO:0008254">
    <property type="term" value="F:3'-nucleotidase activity"/>
    <property type="evidence" value="ECO:0000318"/>
    <property type="project" value="GO_Central"/>
</dbReference>
<dbReference type="GO" id="GO:0008253">
    <property type="term" value="F:5'-nucleotidase activity"/>
    <property type="evidence" value="ECO:0000318"/>
    <property type="project" value="GO_Central"/>
</dbReference>
<dbReference type="GO" id="GO:0004309">
    <property type="term" value="F:exopolyphosphatase activity"/>
    <property type="evidence" value="ECO:0000318"/>
    <property type="project" value="GO_Central"/>
</dbReference>
<dbReference type="GO" id="GO:0046872">
    <property type="term" value="F:metal ion binding"/>
    <property type="evidence" value="ECO:0007669"/>
    <property type="project" value="UniProtKB-UniRule"/>
</dbReference>
<dbReference type="GO" id="GO:0000166">
    <property type="term" value="F:nucleotide binding"/>
    <property type="evidence" value="ECO:0007669"/>
    <property type="project" value="UniProtKB-KW"/>
</dbReference>
<dbReference type="FunFam" id="3.40.1210.10:FF:000001">
    <property type="entry name" value="5'/3'-nucleotidase SurE"/>
    <property type="match status" value="1"/>
</dbReference>
<dbReference type="Gene3D" id="3.40.1210.10">
    <property type="entry name" value="Survival protein SurE-like phosphatase/nucleotidase"/>
    <property type="match status" value="1"/>
</dbReference>
<dbReference type="HAMAP" id="MF_00060">
    <property type="entry name" value="SurE"/>
    <property type="match status" value="1"/>
</dbReference>
<dbReference type="InterPro" id="IPR030048">
    <property type="entry name" value="SurE"/>
</dbReference>
<dbReference type="InterPro" id="IPR002828">
    <property type="entry name" value="SurE-like_Pase/nucleotidase"/>
</dbReference>
<dbReference type="InterPro" id="IPR036523">
    <property type="entry name" value="SurE-like_sf"/>
</dbReference>
<dbReference type="NCBIfam" id="NF001489">
    <property type="entry name" value="PRK00346.1-3"/>
    <property type="match status" value="1"/>
</dbReference>
<dbReference type="NCBIfam" id="NF001490">
    <property type="entry name" value="PRK00346.1-4"/>
    <property type="match status" value="1"/>
</dbReference>
<dbReference type="NCBIfam" id="NF001492">
    <property type="entry name" value="PRK00346.2-2"/>
    <property type="match status" value="1"/>
</dbReference>
<dbReference type="NCBIfam" id="TIGR00087">
    <property type="entry name" value="surE"/>
    <property type="match status" value="1"/>
</dbReference>
<dbReference type="PANTHER" id="PTHR30457">
    <property type="entry name" value="5'-NUCLEOTIDASE SURE"/>
    <property type="match status" value="1"/>
</dbReference>
<dbReference type="PANTHER" id="PTHR30457:SF12">
    <property type="entry name" value="5'_3'-NUCLEOTIDASE SURE"/>
    <property type="match status" value="1"/>
</dbReference>
<dbReference type="Pfam" id="PF01975">
    <property type="entry name" value="SurE"/>
    <property type="match status" value="1"/>
</dbReference>
<dbReference type="SUPFAM" id="SSF64167">
    <property type="entry name" value="SurE-like"/>
    <property type="match status" value="1"/>
</dbReference>
<keyword id="KW-0963">Cytoplasm</keyword>
<keyword id="KW-0378">Hydrolase</keyword>
<keyword id="KW-0479">Metal-binding</keyword>
<keyword id="KW-0547">Nucleotide-binding</keyword>
<keyword id="KW-1185">Reference proteome</keyword>
<name>SURE_GEOSL</name>
<reference key="1">
    <citation type="journal article" date="2003" name="Science">
        <title>Genome of Geobacter sulfurreducens: metal reduction in subsurface environments.</title>
        <authorList>
            <person name="Methe B.A."/>
            <person name="Nelson K.E."/>
            <person name="Eisen J.A."/>
            <person name="Paulsen I.T."/>
            <person name="Nelson W.C."/>
            <person name="Heidelberg J.F."/>
            <person name="Wu D."/>
            <person name="Wu M."/>
            <person name="Ward N.L."/>
            <person name="Beanan M.J."/>
            <person name="Dodson R.J."/>
            <person name="Madupu R."/>
            <person name="Brinkac L.M."/>
            <person name="Daugherty S.C."/>
            <person name="DeBoy R.T."/>
            <person name="Durkin A.S."/>
            <person name="Gwinn M.L."/>
            <person name="Kolonay J.F."/>
            <person name="Sullivan S.A."/>
            <person name="Haft D.H."/>
            <person name="Selengut J."/>
            <person name="Davidsen T.M."/>
            <person name="Zafar N."/>
            <person name="White O."/>
            <person name="Tran B."/>
            <person name="Romero C."/>
            <person name="Forberger H.A."/>
            <person name="Weidman J.F."/>
            <person name="Khouri H.M."/>
            <person name="Feldblyum T.V."/>
            <person name="Utterback T.R."/>
            <person name="Van Aken S.E."/>
            <person name="Lovley D.R."/>
            <person name="Fraser C.M."/>
        </authorList>
    </citation>
    <scope>NUCLEOTIDE SEQUENCE [LARGE SCALE GENOMIC DNA]</scope>
    <source>
        <strain>ATCC 51573 / DSM 12127 / PCA</strain>
    </source>
</reference>
<protein>
    <recommendedName>
        <fullName evidence="1">5'-nucleotidase SurE</fullName>
        <ecNumber evidence="1">3.1.3.5</ecNumber>
    </recommendedName>
    <alternativeName>
        <fullName evidence="1">Nucleoside 5'-monophosphate phosphohydrolase</fullName>
    </alternativeName>
</protein>
<evidence type="ECO:0000255" key="1">
    <source>
        <dbReference type="HAMAP-Rule" id="MF_00060"/>
    </source>
</evidence>
<feature type="chain" id="PRO_0000235617" description="5'-nucleotidase SurE">
    <location>
        <begin position="1"/>
        <end position="262"/>
    </location>
</feature>
<feature type="binding site" evidence="1">
    <location>
        <position position="8"/>
    </location>
    <ligand>
        <name>a divalent metal cation</name>
        <dbReference type="ChEBI" id="CHEBI:60240"/>
    </ligand>
</feature>
<feature type="binding site" evidence="1">
    <location>
        <position position="9"/>
    </location>
    <ligand>
        <name>a divalent metal cation</name>
        <dbReference type="ChEBI" id="CHEBI:60240"/>
    </ligand>
</feature>
<feature type="binding site" evidence="1">
    <location>
        <position position="39"/>
    </location>
    <ligand>
        <name>a divalent metal cation</name>
        <dbReference type="ChEBI" id="CHEBI:60240"/>
    </ligand>
</feature>
<feature type="binding site" evidence="1">
    <location>
        <position position="91"/>
    </location>
    <ligand>
        <name>a divalent metal cation</name>
        <dbReference type="ChEBI" id="CHEBI:60240"/>
    </ligand>
</feature>
<comment type="function">
    <text evidence="1">Nucleotidase that shows phosphatase activity on nucleoside 5'-monophosphates.</text>
</comment>
<comment type="catalytic activity">
    <reaction evidence="1">
        <text>a ribonucleoside 5'-phosphate + H2O = a ribonucleoside + phosphate</text>
        <dbReference type="Rhea" id="RHEA:12484"/>
        <dbReference type="ChEBI" id="CHEBI:15377"/>
        <dbReference type="ChEBI" id="CHEBI:18254"/>
        <dbReference type="ChEBI" id="CHEBI:43474"/>
        <dbReference type="ChEBI" id="CHEBI:58043"/>
        <dbReference type="EC" id="3.1.3.5"/>
    </reaction>
</comment>
<comment type="cofactor">
    <cofactor evidence="1">
        <name>a divalent metal cation</name>
        <dbReference type="ChEBI" id="CHEBI:60240"/>
    </cofactor>
    <text evidence="1">Binds 1 divalent metal cation per subunit.</text>
</comment>
<comment type="subcellular location">
    <subcellularLocation>
        <location evidence="1">Cytoplasm</location>
    </subcellularLocation>
</comment>
<comment type="similarity">
    <text evidence="1">Belongs to the SurE nucleotidase family.</text>
</comment>
<proteinExistence type="inferred from homology"/>
<organism>
    <name type="scientific">Geobacter sulfurreducens (strain ATCC 51573 / DSM 12127 / PCA)</name>
    <dbReference type="NCBI Taxonomy" id="243231"/>
    <lineage>
        <taxon>Bacteria</taxon>
        <taxon>Pseudomonadati</taxon>
        <taxon>Thermodesulfobacteriota</taxon>
        <taxon>Desulfuromonadia</taxon>
        <taxon>Geobacterales</taxon>
        <taxon>Geobacteraceae</taxon>
        <taxon>Geobacter</taxon>
    </lineage>
</organism>
<sequence length="262" mass="27542">MNILVTNDDGVHAPGIVALAEALRLVGTVTVVAPDRERSAVGHALTLHHPLRVTEIMAGIFAVDGTPTDCVNLGIHTLLAEAPDIVVSGVNRGGNLGDDITYSGTVSAALEATLMGIPAIAVSLATNGHGSNYRAAAAFAAQLAREVLDRGLPRDTFLNVNVPDLPAEELGGPVITSQGKRDYGGDIVTKVDPRGRNYYWIGGNEPVFRDIEGTDFHAVKRGRISVTPLHLDLTNYASLSILQSWDLSACRPEAGQPSGALL</sequence>